<feature type="chain" id="PRO_1000062426" description="Putative septation protein SpoVG">
    <location>
        <begin position="1"/>
        <end position="95"/>
    </location>
</feature>
<organism>
    <name type="scientific">Clostridium botulinum (strain Hall / ATCC 3502 / NCTC 13319 / Type A)</name>
    <dbReference type="NCBI Taxonomy" id="441771"/>
    <lineage>
        <taxon>Bacteria</taxon>
        <taxon>Bacillati</taxon>
        <taxon>Bacillota</taxon>
        <taxon>Clostridia</taxon>
        <taxon>Eubacteriales</taxon>
        <taxon>Clostridiaceae</taxon>
        <taxon>Clostridium</taxon>
    </lineage>
</organism>
<name>SP5G_CLOBH</name>
<comment type="function">
    <text evidence="1">Could be involved in septation.</text>
</comment>
<comment type="similarity">
    <text evidence="1">Belongs to the SpoVG family.</text>
</comment>
<reference key="1">
    <citation type="journal article" date="2007" name="Genome Res.">
        <title>Genome sequence of a proteolytic (Group I) Clostridium botulinum strain Hall A and comparative analysis of the clostridial genomes.</title>
        <authorList>
            <person name="Sebaihia M."/>
            <person name="Peck M.W."/>
            <person name="Minton N.P."/>
            <person name="Thomson N.R."/>
            <person name="Holden M.T.G."/>
            <person name="Mitchell W.J."/>
            <person name="Carter A.T."/>
            <person name="Bentley S.D."/>
            <person name="Mason D.R."/>
            <person name="Crossman L."/>
            <person name="Paul C.J."/>
            <person name="Ivens A."/>
            <person name="Wells-Bennik M.H.J."/>
            <person name="Davis I.J."/>
            <person name="Cerdeno-Tarraga A.M."/>
            <person name="Churcher C."/>
            <person name="Quail M.A."/>
            <person name="Chillingworth T."/>
            <person name="Feltwell T."/>
            <person name="Fraser A."/>
            <person name="Goodhead I."/>
            <person name="Hance Z."/>
            <person name="Jagels K."/>
            <person name="Larke N."/>
            <person name="Maddison M."/>
            <person name="Moule S."/>
            <person name="Mungall K."/>
            <person name="Norbertczak H."/>
            <person name="Rabbinowitsch E."/>
            <person name="Sanders M."/>
            <person name="Simmonds M."/>
            <person name="White B."/>
            <person name="Whithead S."/>
            <person name="Parkhill J."/>
        </authorList>
    </citation>
    <scope>NUCLEOTIDE SEQUENCE [LARGE SCALE GENOMIC DNA]</scope>
    <source>
        <strain>Hall / ATCC 3502 / NCTC 13319 / Type A</strain>
    </source>
</reference>
<reference key="2">
    <citation type="journal article" date="2007" name="PLoS ONE">
        <title>Analysis of the neurotoxin complex genes in Clostridium botulinum A1-A4 and B1 strains: BoNT/A3, /Ba4 and /B1 clusters are located within plasmids.</title>
        <authorList>
            <person name="Smith T.J."/>
            <person name="Hill K.K."/>
            <person name="Foley B.T."/>
            <person name="Detter J.C."/>
            <person name="Munk A.C."/>
            <person name="Bruce D.C."/>
            <person name="Doggett N.A."/>
            <person name="Smith L.A."/>
            <person name="Marks J.D."/>
            <person name="Xie G."/>
            <person name="Brettin T.S."/>
        </authorList>
    </citation>
    <scope>NUCLEOTIDE SEQUENCE [LARGE SCALE GENOMIC DNA]</scope>
    <source>
        <strain>Hall / ATCC 3502 / NCTC 13319 / Type A</strain>
    </source>
</reference>
<accession>A5I7S1</accession>
<accession>A7G903</accession>
<protein>
    <recommendedName>
        <fullName evidence="1">Putative septation protein SpoVG</fullName>
    </recommendedName>
</protein>
<gene>
    <name evidence="1" type="primary">spoVG</name>
    <name type="ordered locus">CBO3546</name>
    <name type="ordered locus">CLC_3524</name>
</gene>
<dbReference type="EMBL" id="CP000727">
    <property type="protein sequence ID" value="ABS37785.1"/>
    <property type="molecule type" value="Genomic_DNA"/>
</dbReference>
<dbReference type="EMBL" id="AM412317">
    <property type="protein sequence ID" value="CAL85106.1"/>
    <property type="molecule type" value="Genomic_DNA"/>
</dbReference>
<dbReference type="RefSeq" id="WP_003359319.1">
    <property type="nucleotide sequence ID" value="NC_009698.1"/>
</dbReference>
<dbReference type="RefSeq" id="YP_001256027.1">
    <property type="nucleotide sequence ID" value="NC_009495.1"/>
</dbReference>
<dbReference type="RefSeq" id="YP_001389268.1">
    <property type="nucleotide sequence ID" value="NC_009698.1"/>
</dbReference>
<dbReference type="SMR" id="A5I7S1"/>
<dbReference type="GeneID" id="92940335"/>
<dbReference type="KEGG" id="cbh:CLC_3524"/>
<dbReference type="KEGG" id="cbo:CBO3546"/>
<dbReference type="PATRIC" id="fig|413999.7.peg.3523"/>
<dbReference type="HOGENOM" id="CLU_103669_2_1_9"/>
<dbReference type="PRO" id="PR:A5I7S1"/>
<dbReference type="Proteomes" id="UP000001986">
    <property type="component" value="Chromosome"/>
</dbReference>
<dbReference type="GO" id="GO:0000917">
    <property type="term" value="P:division septum assembly"/>
    <property type="evidence" value="ECO:0007669"/>
    <property type="project" value="UniProtKB-KW"/>
</dbReference>
<dbReference type="GO" id="GO:0030435">
    <property type="term" value="P:sporulation resulting in formation of a cellular spore"/>
    <property type="evidence" value="ECO:0007669"/>
    <property type="project" value="InterPro"/>
</dbReference>
<dbReference type="Gene3D" id="3.30.1120.40">
    <property type="entry name" value="Stage V sporulation protein G"/>
    <property type="match status" value="1"/>
</dbReference>
<dbReference type="HAMAP" id="MF_00819">
    <property type="entry name" value="SpoVG"/>
    <property type="match status" value="1"/>
</dbReference>
<dbReference type="InterPro" id="IPR007170">
    <property type="entry name" value="SpoVG"/>
</dbReference>
<dbReference type="InterPro" id="IPR036751">
    <property type="entry name" value="SpoVG_sf"/>
</dbReference>
<dbReference type="NCBIfam" id="NF009749">
    <property type="entry name" value="PRK13259.1"/>
    <property type="match status" value="1"/>
</dbReference>
<dbReference type="PANTHER" id="PTHR38429">
    <property type="entry name" value="SEPTATION PROTEIN SPOVG-RELATED"/>
    <property type="match status" value="1"/>
</dbReference>
<dbReference type="PANTHER" id="PTHR38429:SF1">
    <property type="entry name" value="SEPTATION PROTEIN SPOVG-RELATED"/>
    <property type="match status" value="1"/>
</dbReference>
<dbReference type="Pfam" id="PF04026">
    <property type="entry name" value="SpoVG"/>
    <property type="match status" value="1"/>
</dbReference>
<dbReference type="SUPFAM" id="SSF160537">
    <property type="entry name" value="SpoVG-like"/>
    <property type="match status" value="1"/>
</dbReference>
<sequence length="95" mass="10923">MQITDVRVRKIAAEGKMKAIVSVTFDNEFVVHDIKVIEGQNGLFIAMPSRKTPDGEYKDIAHPINTETREKIQKSIIEEYERAKMEEESSEKVQE</sequence>
<evidence type="ECO:0000255" key="1">
    <source>
        <dbReference type="HAMAP-Rule" id="MF_00819"/>
    </source>
</evidence>
<keyword id="KW-0131">Cell cycle</keyword>
<keyword id="KW-0132">Cell division</keyword>
<keyword id="KW-1185">Reference proteome</keyword>
<keyword id="KW-0717">Septation</keyword>
<proteinExistence type="inferred from homology"/>